<reference key="1">
    <citation type="journal article" date="2001" name="Mol. Biol. Evol.">
        <title>Mechanisms for evolving hypervariability: the case of conopeptides.</title>
        <authorList>
            <person name="Conticello S.G."/>
            <person name="Gilad Y."/>
            <person name="Avidan N."/>
            <person name="Ben-Asher E."/>
            <person name="Levy Z."/>
            <person name="Fainzilber M."/>
        </authorList>
    </citation>
    <scope>NUCLEOTIDE SEQUENCE [MRNA]</scope>
    <source>
        <tissue>Venom duct</tissue>
    </source>
</reference>
<dbReference type="EMBL" id="AF214924">
    <property type="protein sequence ID" value="AAG60352.1"/>
    <property type="molecule type" value="mRNA"/>
</dbReference>
<dbReference type="ConoServer" id="611">
    <property type="toxin name" value="TsMMSK-021 precursor"/>
</dbReference>
<dbReference type="GO" id="GO:0005576">
    <property type="term" value="C:extracellular region"/>
    <property type="evidence" value="ECO:0007669"/>
    <property type="project" value="UniProtKB-SubCell"/>
</dbReference>
<dbReference type="GO" id="GO:0008200">
    <property type="term" value="F:ion channel inhibitor activity"/>
    <property type="evidence" value="ECO:0007669"/>
    <property type="project" value="InterPro"/>
</dbReference>
<dbReference type="GO" id="GO:0090729">
    <property type="term" value="F:toxin activity"/>
    <property type="evidence" value="ECO:0007669"/>
    <property type="project" value="UniProtKB-KW"/>
</dbReference>
<dbReference type="InterPro" id="IPR004214">
    <property type="entry name" value="Conotoxin"/>
</dbReference>
<dbReference type="Pfam" id="PF02950">
    <property type="entry name" value="Conotoxin"/>
    <property type="match status" value="1"/>
</dbReference>
<keyword id="KW-0165">Cleavage on pair of basic residues</keyword>
<keyword id="KW-1015">Disulfide bond</keyword>
<keyword id="KW-0379">Hydroxylation</keyword>
<keyword id="KW-0528">Neurotoxin</keyword>
<keyword id="KW-0964">Secreted</keyword>
<keyword id="KW-0732">Signal</keyword>
<keyword id="KW-0800">Toxin</keyword>
<comment type="subcellular location">
    <subcellularLocation>
        <location evidence="5">Secreted</location>
    </subcellularLocation>
</comment>
<comment type="tissue specificity">
    <text evidence="5">Expressed by the venom duct.</text>
</comment>
<comment type="domain">
    <text evidence="4">The cysteine framework is III (CC-C-C-CC). Classified in the M-2 branch, since 2 residues stand between the fourth and the fifth cysteine residues.</text>
</comment>
<comment type="similarity">
    <text evidence="4">Belongs to the conotoxin M superfamily.</text>
</comment>
<organism>
    <name type="scientific">Conus tessulatus</name>
    <name type="common">Tessellate cone</name>
    <dbReference type="NCBI Taxonomy" id="101317"/>
    <lineage>
        <taxon>Eukaryota</taxon>
        <taxon>Metazoa</taxon>
        <taxon>Spiralia</taxon>
        <taxon>Lophotrochozoa</taxon>
        <taxon>Mollusca</taxon>
        <taxon>Gastropoda</taxon>
        <taxon>Caenogastropoda</taxon>
        <taxon>Neogastropoda</taxon>
        <taxon>Conoidea</taxon>
        <taxon>Conidae</taxon>
        <taxon>Conus</taxon>
        <taxon>Tesselliconus</taxon>
    </lineage>
</organism>
<accession>Q9BPJ9</accession>
<evidence type="ECO:0000250" key="1"/>
<evidence type="ECO:0000250" key="2">
    <source>
        <dbReference type="UniProtKB" id="P0CI24"/>
    </source>
</evidence>
<evidence type="ECO:0000255" key="3"/>
<evidence type="ECO:0000305" key="4"/>
<evidence type="ECO:0000305" key="5">
    <source>
    </source>
</evidence>
<protein>
    <recommendedName>
        <fullName>Conotoxin TsMMSK-021</fullName>
    </recommendedName>
    <alternativeName>
        <fullName>Conotoxin TsMMSK-022</fullName>
    </alternativeName>
</protein>
<feature type="signal peptide" evidence="3">
    <location>
        <begin position="1"/>
        <end position="20"/>
    </location>
</feature>
<feature type="propeptide" id="PRO_0000404910" evidence="1">
    <location>
        <begin position="21"/>
        <end position="50"/>
    </location>
</feature>
<feature type="peptide" id="PRO_0000404911" description="Conotoxin TsMMSK-021">
    <location>
        <begin position="53"/>
        <end position="68"/>
    </location>
</feature>
<feature type="modified residue" description="4-hydroxyproline" evidence="1">
    <location>
        <position position="64"/>
    </location>
</feature>
<feature type="disulfide bond" evidence="2">
    <location>
        <begin position="53"/>
        <end position="66"/>
    </location>
</feature>
<feature type="disulfide bond" evidence="2">
    <location>
        <begin position="54"/>
        <end position="62"/>
    </location>
</feature>
<feature type="disulfide bond" evidence="2">
    <location>
        <begin position="58"/>
        <end position="65"/>
    </location>
</feature>
<sequence length="68" mass="7526">MMSKLGVLLTICLLLFPLTAVPLDGDQHADRPADRMQDISSEQHPLFDPVKRCCDWPCTIGCVPCCLP</sequence>
<name>M237_CONTS</name>
<proteinExistence type="inferred from homology"/>